<reference key="1">
    <citation type="journal article" date="2003" name="Nature">
        <title>The genome of a motile marine Synechococcus.</title>
        <authorList>
            <person name="Palenik B."/>
            <person name="Brahamsha B."/>
            <person name="Larimer F.W."/>
            <person name="Land M.L."/>
            <person name="Hauser L."/>
            <person name="Chain P."/>
            <person name="Lamerdin J.E."/>
            <person name="Regala W."/>
            <person name="Allen E.E."/>
            <person name="McCarren J."/>
            <person name="Paulsen I.T."/>
            <person name="Dufresne A."/>
            <person name="Partensky F."/>
            <person name="Webb E.A."/>
            <person name="Waterbury J."/>
        </authorList>
    </citation>
    <scope>NUCLEOTIDE SEQUENCE [LARGE SCALE GENOMIC DNA]</scope>
    <source>
        <strain>WH8102</strain>
    </source>
</reference>
<proteinExistence type="inferred from homology"/>
<dbReference type="EMBL" id="BX569695">
    <property type="protein sequence ID" value="CAE08893.1"/>
    <property type="molecule type" value="Genomic_DNA"/>
</dbReference>
<dbReference type="RefSeq" id="WP_011129231.1">
    <property type="nucleotide sequence ID" value="NC_005070.1"/>
</dbReference>
<dbReference type="SMR" id="Q7U3Q2"/>
<dbReference type="STRING" id="84588.SYNW2378"/>
<dbReference type="KEGG" id="syw:SYNW2378"/>
<dbReference type="eggNOG" id="COG0359">
    <property type="taxonomic scope" value="Bacteria"/>
</dbReference>
<dbReference type="HOGENOM" id="CLU_078938_5_1_3"/>
<dbReference type="Proteomes" id="UP000001422">
    <property type="component" value="Chromosome"/>
</dbReference>
<dbReference type="GO" id="GO:1990904">
    <property type="term" value="C:ribonucleoprotein complex"/>
    <property type="evidence" value="ECO:0007669"/>
    <property type="project" value="UniProtKB-KW"/>
</dbReference>
<dbReference type="GO" id="GO:0005840">
    <property type="term" value="C:ribosome"/>
    <property type="evidence" value="ECO:0007669"/>
    <property type="project" value="UniProtKB-KW"/>
</dbReference>
<dbReference type="GO" id="GO:0019843">
    <property type="term" value="F:rRNA binding"/>
    <property type="evidence" value="ECO:0007669"/>
    <property type="project" value="UniProtKB-UniRule"/>
</dbReference>
<dbReference type="GO" id="GO:0003735">
    <property type="term" value="F:structural constituent of ribosome"/>
    <property type="evidence" value="ECO:0007669"/>
    <property type="project" value="InterPro"/>
</dbReference>
<dbReference type="GO" id="GO:0006412">
    <property type="term" value="P:translation"/>
    <property type="evidence" value="ECO:0007669"/>
    <property type="project" value="UniProtKB-UniRule"/>
</dbReference>
<dbReference type="Gene3D" id="3.10.430.100">
    <property type="entry name" value="Ribosomal protein L9, C-terminal domain"/>
    <property type="match status" value="1"/>
</dbReference>
<dbReference type="Gene3D" id="3.40.5.10">
    <property type="entry name" value="Ribosomal protein L9, N-terminal domain"/>
    <property type="match status" value="1"/>
</dbReference>
<dbReference type="HAMAP" id="MF_00503">
    <property type="entry name" value="Ribosomal_bL9"/>
    <property type="match status" value="1"/>
</dbReference>
<dbReference type="InterPro" id="IPR000244">
    <property type="entry name" value="Ribosomal_bL9"/>
</dbReference>
<dbReference type="InterPro" id="IPR009027">
    <property type="entry name" value="Ribosomal_bL9/RNase_H1_N"/>
</dbReference>
<dbReference type="InterPro" id="IPR020594">
    <property type="entry name" value="Ribosomal_bL9_bac/chp"/>
</dbReference>
<dbReference type="InterPro" id="IPR020069">
    <property type="entry name" value="Ribosomal_bL9_C"/>
</dbReference>
<dbReference type="InterPro" id="IPR036791">
    <property type="entry name" value="Ribosomal_bL9_C_sf"/>
</dbReference>
<dbReference type="InterPro" id="IPR020070">
    <property type="entry name" value="Ribosomal_bL9_N"/>
</dbReference>
<dbReference type="InterPro" id="IPR036935">
    <property type="entry name" value="Ribosomal_bL9_N_sf"/>
</dbReference>
<dbReference type="NCBIfam" id="TIGR00158">
    <property type="entry name" value="L9"/>
    <property type="match status" value="1"/>
</dbReference>
<dbReference type="PANTHER" id="PTHR21368">
    <property type="entry name" value="50S RIBOSOMAL PROTEIN L9"/>
    <property type="match status" value="1"/>
</dbReference>
<dbReference type="Pfam" id="PF03948">
    <property type="entry name" value="Ribosomal_L9_C"/>
    <property type="match status" value="1"/>
</dbReference>
<dbReference type="Pfam" id="PF01281">
    <property type="entry name" value="Ribosomal_L9_N"/>
    <property type="match status" value="1"/>
</dbReference>
<dbReference type="SUPFAM" id="SSF55658">
    <property type="entry name" value="L9 N-domain-like"/>
    <property type="match status" value="1"/>
</dbReference>
<dbReference type="SUPFAM" id="SSF55653">
    <property type="entry name" value="Ribosomal protein L9 C-domain"/>
    <property type="match status" value="1"/>
</dbReference>
<dbReference type="PROSITE" id="PS00651">
    <property type="entry name" value="RIBOSOMAL_L9"/>
    <property type="match status" value="1"/>
</dbReference>
<keyword id="KW-0687">Ribonucleoprotein</keyword>
<keyword id="KW-0689">Ribosomal protein</keyword>
<keyword id="KW-0694">RNA-binding</keyword>
<keyword id="KW-0699">rRNA-binding</keyword>
<organism>
    <name type="scientific">Parasynechococcus marenigrum (strain WH8102)</name>
    <dbReference type="NCBI Taxonomy" id="84588"/>
    <lineage>
        <taxon>Bacteria</taxon>
        <taxon>Bacillati</taxon>
        <taxon>Cyanobacteriota</taxon>
        <taxon>Cyanophyceae</taxon>
        <taxon>Synechococcales</taxon>
        <taxon>Prochlorococcaceae</taxon>
        <taxon>Parasynechococcus</taxon>
        <taxon>Parasynechococcus marenigrum</taxon>
    </lineage>
</organism>
<gene>
    <name evidence="1" type="primary">rplI</name>
    <name evidence="1" type="synonym">rpl9</name>
    <name type="ordered locus">SYNW2378</name>
</gene>
<feature type="chain" id="PRO_0000236607" description="Large ribosomal subunit protein bL9">
    <location>
        <begin position="1"/>
        <end position="152"/>
    </location>
</feature>
<sequence length="152" mass="16798">MPKRVQVVLNEDVLSLGKDGDLVEVAPGYARNFLLPFGKAVPVTPAVMKQVEHRRAKEAERQAALKQAALDFRTALDTIGRFTVKKQTGEDNVLFGTVTNGDVAEAIQDATKKEIDRRDIVVPEIHRTGKYSVTVKLHSEVTAEINLEVVSY</sequence>
<accession>Q7U3Q2</accession>
<comment type="function">
    <text evidence="1">Binds to the 23S rRNA.</text>
</comment>
<comment type="similarity">
    <text evidence="1">Belongs to the bacterial ribosomal protein bL9 family.</text>
</comment>
<protein>
    <recommendedName>
        <fullName evidence="1">Large ribosomal subunit protein bL9</fullName>
    </recommendedName>
    <alternativeName>
        <fullName evidence="2">50S ribosomal protein L9</fullName>
    </alternativeName>
</protein>
<evidence type="ECO:0000255" key="1">
    <source>
        <dbReference type="HAMAP-Rule" id="MF_00503"/>
    </source>
</evidence>
<evidence type="ECO:0000305" key="2"/>
<name>RL9_PARMW</name>